<reference key="1">
    <citation type="journal article" date="2009" name="Genome Res.">
        <title>Genome structure of a Saccharomyces cerevisiae strain widely used in bioethanol production.</title>
        <authorList>
            <person name="Argueso J.L."/>
            <person name="Carazzolle M.F."/>
            <person name="Mieczkowski P.A."/>
            <person name="Duarte F.M."/>
            <person name="Netto O.V.C."/>
            <person name="Missawa S.K."/>
            <person name="Galzerani F."/>
            <person name="Costa G.G.L."/>
            <person name="Vidal R.O."/>
            <person name="Noronha M.F."/>
            <person name="Dominska M."/>
            <person name="Andrietta M.G.S."/>
            <person name="Andrietta S.R."/>
            <person name="Cunha A.F."/>
            <person name="Gomes L.H."/>
            <person name="Tavares F.C.A."/>
            <person name="Alcarde A.R."/>
            <person name="Dietrich F.S."/>
            <person name="McCusker J.H."/>
            <person name="Petes T.D."/>
            <person name="Pereira G.A.G."/>
        </authorList>
    </citation>
    <scope>NUCLEOTIDE SEQUENCE [LARGE SCALE GENOMIC DNA]</scope>
    <source>
        <strain>JAY291</strain>
    </source>
</reference>
<proteinExistence type="inferred from homology"/>
<accession>C7GSL4</accession>
<protein>
    <recommendedName>
        <fullName evidence="3">Small ribosomal subunit protein eS1A</fullName>
    </recommendedName>
    <alternativeName>
        <fullName evidence="5">40S ribosomal protein S1-A</fullName>
    </alternativeName>
</protein>
<dbReference type="EMBL" id="ACFL01000194">
    <property type="protein sequence ID" value="EEU06201.1"/>
    <property type="molecule type" value="Genomic_DNA"/>
</dbReference>
<dbReference type="SMR" id="C7GSL4"/>
<dbReference type="Proteomes" id="UP000008073">
    <property type="component" value="Unassembled WGS sequence"/>
</dbReference>
<dbReference type="GO" id="GO:0022627">
    <property type="term" value="C:cytosolic small ribosomal subunit"/>
    <property type="evidence" value="ECO:0007669"/>
    <property type="project" value="UniProtKB-UniRule"/>
</dbReference>
<dbReference type="GO" id="GO:0003735">
    <property type="term" value="F:structural constituent of ribosome"/>
    <property type="evidence" value="ECO:0007669"/>
    <property type="project" value="UniProtKB-UniRule"/>
</dbReference>
<dbReference type="GO" id="GO:0006412">
    <property type="term" value="P:translation"/>
    <property type="evidence" value="ECO:0007669"/>
    <property type="project" value="UniProtKB-UniRule"/>
</dbReference>
<dbReference type="HAMAP" id="MF_03122">
    <property type="entry name" value="Ribosomal_eS1_euk"/>
    <property type="match status" value="1"/>
</dbReference>
<dbReference type="InterPro" id="IPR001593">
    <property type="entry name" value="Ribosomal_eS1"/>
</dbReference>
<dbReference type="InterPro" id="IPR018281">
    <property type="entry name" value="Ribosomal_eS1_CS"/>
</dbReference>
<dbReference type="InterPro" id="IPR027500">
    <property type="entry name" value="Ribosomal_eS1_euk"/>
</dbReference>
<dbReference type="PANTHER" id="PTHR11830">
    <property type="entry name" value="40S RIBOSOMAL PROTEIN S3A"/>
    <property type="match status" value="1"/>
</dbReference>
<dbReference type="Pfam" id="PF01015">
    <property type="entry name" value="Ribosomal_S3Ae"/>
    <property type="match status" value="1"/>
</dbReference>
<dbReference type="SMART" id="SM01397">
    <property type="entry name" value="Ribosomal_S3Ae"/>
    <property type="match status" value="1"/>
</dbReference>
<dbReference type="PROSITE" id="PS01191">
    <property type="entry name" value="RIBOSOMAL_S3AE"/>
    <property type="match status" value="1"/>
</dbReference>
<organism>
    <name type="scientific">Saccharomyces cerevisiae (strain JAY291)</name>
    <name type="common">Baker's yeast</name>
    <dbReference type="NCBI Taxonomy" id="574961"/>
    <lineage>
        <taxon>Eukaryota</taxon>
        <taxon>Fungi</taxon>
        <taxon>Dikarya</taxon>
        <taxon>Ascomycota</taxon>
        <taxon>Saccharomycotina</taxon>
        <taxon>Saccharomycetes</taxon>
        <taxon>Saccharomycetales</taxon>
        <taxon>Saccharomycetaceae</taxon>
        <taxon>Saccharomyces</taxon>
    </lineage>
</organism>
<keyword id="KW-0007">Acetylation</keyword>
<keyword id="KW-0963">Cytoplasm</keyword>
<keyword id="KW-1017">Isopeptide bond</keyword>
<keyword id="KW-0597">Phosphoprotein</keyword>
<keyword id="KW-0687">Ribonucleoprotein</keyword>
<keyword id="KW-0689">Ribosomal protein</keyword>
<keyword id="KW-0832">Ubl conjugation</keyword>
<feature type="initiator methionine" description="Removed" evidence="3">
    <location>
        <position position="1"/>
    </location>
</feature>
<feature type="chain" id="PRO_0000389406" description="Small ribosomal subunit protein eS1A">
    <location>
        <begin position="2"/>
        <end position="255"/>
    </location>
</feature>
<feature type="region of interest" description="Disordered" evidence="4">
    <location>
        <begin position="1"/>
        <end position="20"/>
    </location>
</feature>
<feature type="compositionally biased region" description="Basic residues" evidence="4">
    <location>
        <begin position="1"/>
        <end position="18"/>
    </location>
</feature>
<feature type="modified residue" description="N-acetylalanine; partial" evidence="2 3">
    <location>
        <position position="2"/>
    </location>
</feature>
<feature type="modified residue" description="Phosphothreonine" evidence="2">
    <location>
        <position position="245"/>
    </location>
</feature>
<feature type="modified residue" description="Phosphothreonine" evidence="2">
    <location>
        <position position="254"/>
    </location>
</feature>
<feature type="cross-link" description="Glycyl lysine isopeptide (Lys-Gly) (interchain with G-Cter in ubiquitin)" evidence="1">
    <location>
        <position position="248"/>
    </location>
</feature>
<sequence length="255" mass="28743">MAVGKNKRLSKGKKGQKKRVVDPFTRKEWFDIKAPSTFENRNVGKTLVNKSTGLKSASDALKGRVVEVCLADLQGSEDHSFRKIKLRVDEVQGKNLLTNFHGMDFTTDKLRSMVRKWQTLIEANVTVKTSDDYVLRIFAIAFTRKQANQVKRHSYAQSSHIRAIRKVISEILTKEVQGSTLAQLTSKLIPEVINKEIENATKDIFPLQNIHVRKVKLLKQPKFDVGALMALHGEGSGEEKGKKVTGFKDEVLETV</sequence>
<evidence type="ECO:0000250" key="1">
    <source>
        <dbReference type="UniProtKB" id="P23248"/>
    </source>
</evidence>
<evidence type="ECO:0000250" key="2">
    <source>
        <dbReference type="UniProtKB" id="P33442"/>
    </source>
</evidence>
<evidence type="ECO:0000255" key="3">
    <source>
        <dbReference type="HAMAP-Rule" id="MF_03122"/>
    </source>
</evidence>
<evidence type="ECO:0000256" key="4">
    <source>
        <dbReference type="SAM" id="MobiDB-lite"/>
    </source>
</evidence>
<evidence type="ECO:0000305" key="5"/>
<name>RS3A1_YEAS2</name>
<comment type="subunit">
    <text evidence="3">Component of the small ribosomal subunit. Mature ribosomes consist of a small (40S) and a large (60S) subunit. The 40S subunit contains about 33 different proteins and 1 molecule of RNA (18S). The 60S subunit contains about 49 different proteins and 3 molecules of RNA (25S, 5.8S and 5S).</text>
</comment>
<comment type="subcellular location">
    <subcellularLocation>
        <location evidence="3">Cytoplasm</location>
    </subcellularLocation>
</comment>
<comment type="similarity">
    <text evidence="3">Belongs to the eukaryotic ribosomal protein eS1 family.</text>
</comment>
<gene>
    <name evidence="3" type="primary">RPS1A</name>
    <name type="ORF">C1Q_03372</name>
</gene>